<sequence length="119" mass="13335">MGMKIVGRERRKLRIRKKVEGTPERPRLSVFRSSKHIYAQVIDDVSGKTLAHASTLSKDLKGSLDEDNKVEAAKKVGALIARICKERQIDKVVFDRNGYLYHGRVSALAQAAREAGLDF</sequence>
<dbReference type="EMBL" id="AM746676">
    <property type="protein sequence ID" value="CAN98117.1"/>
    <property type="molecule type" value="Genomic_DNA"/>
</dbReference>
<dbReference type="RefSeq" id="WP_012240556.1">
    <property type="nucleotide sequence ID" value="NC_010162.1"/>
</dbReference>
<dbReference type="SMR" id="A9FGF8"/>
<dbReference type="STRING" id="448385.sce7947"/>
<dbReference type="KEGG" id="scl:sce7947"/>
<dbReference type="eggNOG" id="COG0256">
    <property type="taxonomic scope" value="Bacteria"/>
</dbReference>
<dbReference type="HOGENOM" id="CLU_098841_0_1_7"/>
<dbReference type="OrthoDB" id="9810939at2"/>
<dbReference type="BioCyc" id="SCEL448385:SCE_RS40680-MONOMER"/>
<dbReference type="Proteomes" id="UP000002139">
    <property type="component" value="Chromosome"/>
</dbReference>
<dbReference type="GO" id="GO:0022625">
    <property type="term" value="C:cytosolic large ribosomal subunit"/>
    <property type="evidence" value="ECO:0007669"/>
    <property type="project" value="TreeGrafter"/>
</dbReference>
<dbReference type="GO" id="GO:0008097">
    <property type="term" value="F:5S rRNA binding"/>
    <property type="evidence" value="ECO:0007669"/>
    <property type="project" value="TreeGrafter"/>
</dbReference>
<dbReference type="GO" id="GO:0003735">
    <property type="term" value="F:structural constituent of ribosome"/>
    <property type="evidence" value="ECO:0007669"/>
    <property type="project" value="InterPro"/>
</dbReference>
<dbReference type="GO" id="GO:0006412">
    <property type="term" value="P:translation"/>
    <property type="evidence" value="ECO:0007669"/>
    <property type="project" value="UniProtKB-UniRule"/>
</dbReference>
<dbReference type="CDD" id="cd00432">
    <property type="entry name" value="Ribosomal_L18_L5e"/>
    <property type="match status" value="1"/>
</dbReference>
<dbReference type="FunFam" id="3.30.420.100:FF:000001">
    <property type="entry name" value="50S ribosomal protein L18"/>
    <property type="match status" value="1"/>
</dbReference>
<dbReference type="Gene3D" id="3.30.420.100">
    <property type="match status" value="1"/>
</dbReference>
<dbReference type="HAMAP" id="MF_01337_B">
    <property type="entry name" value="Ribosomal_uL18_B"/>
    <property type="match status" value="1"/>
</dbReference>
<dbReference type="InterPro" id="IPR004389">
    <property type="entry name" value="Ribosomal_uL18_bac-type"/>
</dbReference>
<dbReference type="InterPro" id="IPR005484">
    <property type="entry name" value="Ribosomal_uL18_bac/euk"/>
</dbReference>
<dbReference type="NCBIfam" id="TIGR00060">
    <property type="entry name" value="L18_bact"/>
    <property type="match status" value="1"/>
</dbReference>
<dbReference type="PANTHER" id="PTHR12899">
    <property type="entry name" value="39S RIBOSOMAL PROTEIN L18, MITOCHONDRIAL"/>
    <property type="match status" value="1"/>
</dbReference>
<dbReference type="PANTHER" id="PTHR12899:SF3">
    <property type="entry name" value="LARGE RIBOSOMAL SUBUNIT PROTEIN UL18M"/>
    <property type="match status" value="1"/>
</dbReference>
<dbReference type="Pfam" id="PF00861">
    <property type="entry name" value="Ribosomal_L18p"/>
    <property type="match status" value="1"/>
</dbReference>
<dbReference type="SUPFAM" id="SSF53137">
    <property type="entry name" value="Translational machinery components"/>
    <property type="match status" value="1"/>
</dbReference>
<gene>
    <name evidence="1" type="primary">rplR</name>
    <name type="ordered locus">sce7947</name>
</gene>
<reference key="1">
    <citation type="journal article" date="2007" name="Nat. Biotechnol.">
        <title>Complete genome sequence of the myxobacterium Sorangium cellulosum.</title>
        <authorList>
            <person name="Schneiker S."/>
            <person name="Perlova O."/>
            <person name="Kaiser O."/>
            <person name="Gerth K."/>
            <person name="Alici A."/>
            <person name="Altmeyer M.O."/>
            <person name="Bartels D."/>
            <person name="Bekel T."/>
            <person name="Beyer S."/>
            <person name="Bode E."/>
            <person name="Bode H.B."/>
            <person name="Bolten C.J."/>
            <person name="Choudhuri J.V."/>
            <person name="Doss S."/>
            <person name="Elnakady Y.A."/>
            <person name="Frank B."/>
            <person name="Gaigalat L."/>
            <person name="Goesmann A."/>
            <person name="Groeger C."/>
            <person name="Gross F."/>
            <person name="Jelsbak L."/>
            <person name="Jelsbak L."/>
            <person name="Kalinowski J."/>
            <person name="Kegler C."/>
            <person name="Knauber T."/>
            <person name="Konietzny S."/>
            <person name="Kopp M."/>
            <person name="Krause L."/>
            <person name="Krug D."/>
            <person name="Linke B."/>
            <person name="Mahmud T."/>
            <person name="Martinez-Arias R."/>
            <person name="McHardy A.C."/>
            <person name="Merai M."/>
            <person name="Meyer F."/>
            <person name="Mormann S."/>
            <person name="Munoz-Dorado J."/>
            <person name="Perez J."/>
            <person name="Pradella S."/>
            <person name="Rachid S."/>
            <person name="Raddatz G."/>
            <person name="Rosenau F."/>
            <person name="Rueckert C."/>
            <person name="Sasse F."/>
            <person name="Scharfe M."/>
            <person name="Schuster S.C."/>
            <person name="Suen G."/>
            <person name="Treuner-Lange A."/>
            <person name="Velicer G.J."/>
            <person name="Vorholter F.-J."/>
            <person name="Weissman K.J."/>
            <person name="Welch R.D."/>
            <person name="Wenzel S.C."/>
            <person name="Whitworth D.E."/>
            <person name="Wilhelm S."/>
            <person name="Wittmann C."/>
            <person name="Bloecker H."/>
            <person name="Puehler A."/>
            <person name="Mueller R."/>
        </authorList>
    </citation>
    <scope>NUCLEOTIDE SEQUENCE [LARGE SCALE GENOMIC DNA]</scope>
    <source>
        <strain>So ce56</strain>
    </source>
</reference>
<protein>
    <recommendedName>
        <fullName evidence="1">Large ribosomal subunit protein uL18</fullName>
    </recommendedName>
    <alternativeName>
        <fullName evidence="2">50S ribosomal protein L18</fullName>
    </alternativeName>
</protein>
<accession>A9FGF8</accession>
<comment type="function">
    <text evidence="1">This is one of the proteins that bind and probably mediate the attachment of the 5S RNA into the large ribosomal subunit, where it forms part of the central protuberance.</text>
</comment>
<comment type="subunit">
    <text evidence="1">Part of the 50S ribosomal subunit; part of the 5S rRNA/L5/L18/L25 subcomplex. Contacts the 5S and 23S rRNAs.</text>
</comment>
<comment type="similarity">
    <text evidence="1">Belongs to the universal ribosomal protein uL18 family.</text>
</comment>
<proteinExistence type="inferred from homology"/>
<evidence type="ECO:0000255" key="1">
    <source>
        <dbReference type="HAMAP-Rule" id="MF_01337"/>
    </source>
</evidence>
<evidence type="ECO:0000305" key="2"/>
<feature type="chain" id="PRO_1000086689" description="Large ribosomal subunit protein uL18">
    <location>
        <begin position="1"/>
        <end position="119"/>
    </location>
</feature>
<name>RL18_SORC5</name>
<organism>
    <name type="scientific">Sorangium cellulosum (strain So ce56)</name>
    <name type="common">Polyangium cellulosum (strain So ce56)</name>
    <dbReference type="NCBI Taxonomy" id="448385"/>
    <lineage>
        <taxon>Bacteria</taxon>
        <taxon>Pseudomonadati</taxon>
        <taxon>Myxococcota</taxon>
        <taxon>Polyangia</taxon>
        <taxon>Polyangiales</taxon>
        <taxon>Polyangiaceae</taxon>
        <taxon>Sorangium</taxon>
    </lineage>
</organism>
<keyword id="KW-1185">Reference proteome</keyword>
<keyword id="KW-0687">Ribonucleoprotein</keyword>
<keyword id="KW-0689">Ribosomal protein</keyword>
<keyword id="KW-0694">RNA-binding</keyword>
<keyword id="KW-0699">rRNA-binding</keyword>